<dbReference type="EMBL" id="U00096">
    <property type="protein sequence ID" value="AAC74913.1"/>
    <property type="molecule type" value="Genomic_DNA"/>
</dbReference>
<dbReference type="EMBL" id="AP009048">
    <property type="protein sequence ID" value="BAE76546.1"/>
    <property type="molecule type" value="Genomic_DNA"/>
</dbReference>
<dbReference type="PIR" id="C64946">
    <property type="entry name" value="C64946"/>
</dbReference>
<dbReference type="RefSeq" id="NP_416357.1">
    <property type="nucleotide sequence ID" value="NC_000913.3"/>
</dbReference>
<dbReference type="RefSeq" id="WP_000011658.1">
    <property type="nucleotide sequence ID" value="NZ_STEB01000009.1"/>
</dbReference>
<dbReference type="SMR" id="P76280"/>
<dbReference type="BioGRID" id="4260362">
    <property type="interactions" value="113"/>
</dbReference>
<dbReference type="FunCoup" id="P76280">
    <property type="interactions" value="37"/>
</dbReference>
<dbReference type="IntAct" id="P76280">
    <property type="interactions" value="11"/>
</dbReference>
<dbReference type="STRING" id="511145.b1843"/>
<dbReference type="PaxDb" id="511145-b1843"/>
<dbReference type="EnsemblBacteria" id="AAC74913">
    <property type="protein sequence ID" value="AAC74913"/>
    <property type="gene ID" value="b1843"/>
</dbReference>
<dbReference type="GeneID" id="75202670"/>
<dbReference type="GeneID" id="948329"/>
<dbReference type="KEGG" id="ecj:JW1832"/>
<dbReference type="KEGG" id="eco:b1843"/>
<dbReference type="KEGG" id="ecoc:C3026_10500"/>
<dbReference type="PATRIC" id="fig|511145.12.peg.1921"/>
<dbReference type="EchoBASE" id="EB3784"/>
<dbReference type="eggNOG" id="COG0388">
    <property type="taxonomic scope" value="Bacteria"/>
</dbReference>
<dbReference type="HOGENOM" id="CLU_030130_8_0_6"/>
<dbReference type="InParanoid" id="P76280"/>
<dbReference type="OMA" id="LWDETGQ"/>
<dbReference type="OrthoDB" id="9760188at2"/>
<dbReference type="PhylomeDB" id="P76280"/>
<dbReference type="BioCyc" id="EcoCyc:G7015-MONOMER"/>
<dbReference type="PRO" id="PR:P76280"/>
<dbReference type="Proteomes" id="UP000000625">
    <property type="component" value="Chromosome"/>
</dbReference>
<dbReference type="Gene3D" id="3.60.110.10">
    <property type="entry name" value="Carbon-nitrogen hydrolase"/>
    <property type="match status" value="1"/>
</dbReference>
<dbReference type="InterPro" id="IPR003010">
    <property type="entry name" value="C-N_Hydrolase"/>
</dbReference>
<dbReference type="InterPro" id="IPR036526">
    <property type="entry name" value="C-N_Hydrolase_sf"/>
</dbReference>
<dbReference type="Pfam" id="PF00795">
    <property type="entry name" value="CN_hydrolase"/>
    <property type="match status" value="2"/>
</dbReference>
<dbReference type="SUPFAM" id="SSF56317">
    <property type="entry name" value="Carbon-nitrogen hydrolase"/>
    <property type="match status" value="1"/>
</dbReference>
<dbReference type="PROSITE" id="PS50263">
    <property type="entry name" value="CN_HYDROLASE"/>
    <property type="match status" value="1"/>
</dbReference>
<accession>P76280</accession>
<accession>Q2MB10</accession>
<proteinExistence type="predicted"/>
<feature type="chain" id="PRO_0000169061" description="Uncharacterized protein YobB">
    <location>
        <begin position="1"/>
        <end position="218"/>
    </location>
</feature>
<feature type="domain" description="CN hydrolase" evidence="1">
    <location>
        <begin position="4"/>
        <end position="207"/>
    </location>
</feature>
<name>YOBB_ECOLI</name>
<sequence length="218" mass="24395">MSFWKVAAAQYEPRKTSLTEQVAHHLEFVRAAARQQCQLLVFPSLSLLGCDYSRRALPAPPDLSLLDPLCYAATTWRMTIIAGLPVEYNDRFIRGIAVFAPWRKTPGIYHQSHGACLGRRSRTITVVDEQPQGMDMDPTCSLFTTGQCLGEPDLLASARRLQFFSHQYSIAVLMANARGNSALWDEYGRLIVRADRGSLLLVGQRSSQGWQGDIIPLR</sequence>
<organism>
    <name type="scientific">Escherichia coli (strain K12)</name>
    <dbReference type="NCBI Taxonomy" id="83333"/>
    <lineage>
        <taxon>Bacteria</taxon>
        <taxon>Pseudomonadati</taxon>
        <taxon>Pseudomonadota</taxon>
        <taxon>Gammaproteobacteria</taxon>
        <taxon>Enterobacterales</taxon>
        <taxon>Enterobacteriaceae</taxon>
        <taxon>Escherichia</taxon>
    </lineage>
</organism>
<protein>
    <recommendedName>
        <fullName>Uncharacterized protein YobB</fullName>
    </recommendedName>
</protein>
<reference key="1">
    <citation type="journal article" date="1997" name="Science">
        <title>The complete genome sequence of Escherichia coli K-12.</title>
        <authorList>
            <person name="Blattner F.R."/>
            <person name="Plunkett G. III"/>
            <person name="Bloch C.A."/>
            <person name="Perna N.T."/>
            <person name="Burland V."/>
            <person name="Riley M."/>
            <person name="Collado-Vides J."/>
            <person name="Glasner J.D."/>
            <person name="Rode C.K."/>
            <person name="Mayhew G.F."/>
            <person name="Gregor J."/>
            <person name="Davis N.W."/>
            <person name="Kirkpatrick H.A."/>
            <person name="Goeden M.A."/>
            <person name="Rose D.J."/>
            <person name="Mau B."/>
            <person name="Shao Y."/>
        </authorList>
    </citation>
    <scope>NUCLEOTIDE SEQUENCE [LARGE SCALE GENOMIC DNA]</scope>
    <source>
        <strain>K12 / MG1655 / ATCC 47076</strain>
    </source>
</reference>
<reference key="2">
    <citation type="journal article" date="2006" name="Mol. Syst. Biol.">
        <title>Highly accurate genome sequences of Escherichia coli K-12 strains MG1655 and W3110.</title>
        <authorList>
            <person name="Hayashi K."/>
            <person name="Morooka N."/>
            <person name="Yamamoto Y."/>
            <person name="Fujita K."/>
            <person name="Isono K."/>
            <person name="Choi S."/>
            <person name="Ohtsubo E."/>
            <person name="Baba T."/>
            <person name="Wanner B.L."/>
            <person name="Mori H."/>
            <person name="Horiuchi T."/>
        </authorList>
    </citation>
    <scope>NUCLEOTIDE SEQUENCE [LARGE SCALE GENOMIC DNA]</scope>
    <source>
        <strain>K12 / W3110 / ATCC 27325 / DSM 5911</strain>
    </source>
</reference>
<evidence type="ECO:0000255" key="1">
    <source>
        <dbReference type="PROSITE-ProRule" id="PRU00054"/>
    </source>
</evidence>
<gene>
    <name type="primary">yobB</name>
    <name type="ordered locus">b1843</name>
    <name type="ordered locus">JW1832</name>
</gene>
<keyword id="KW-1185">Reference proteome</keyword>